<comment type="function">
    <text evidence="1">One of two assembly initiator proteins, it binds directly to the 5'-end of the 23S rRNA, where it nucleates assembly of the 50S subunit.</text>
</comment>
<comment type="function">
    <text evidence="1">One of the proteins that surrounds the polypeptide exit tunnel on the outside of the subunit.</text>
</comment>
<comment type="subunit">
    <text evidence="1">Part of the 50S ribosomal subunit.</text>
</comment>
<comment type="similarity">
    <text evidence="3">Belongs to the universal ribosomal protein uL24 family.</text>
</comment>
<name>RL24_ONYPE</name>
<accession>P60743</accession>
<evidence type="ECO:0000250" key="1"/>
<evidence type="ECO:0000256" key="2">
    <source>
        <dbReference type="SAM" id="MobiDB-lite"/>
    </source>
</evidence>
<evidence type="ECO:0000305" key="3"/>
<organism>
    <name type="scientific">Onion yellows phytoplasma (strain OY-M)</name>
    <dbReference type="NCBI Taxonomy" id="262768"/>
    <lineage>
        <taxon>Bacteria</taxon>
        <taxon>Bacillati</taxon>
        <taxon>Mycoplasmatota</taxon>
        <taxon>Mollicutes</taxon>
        <taxon>Acholeplasmatales</taxon>
        <taxon>Acholeplasmataceae</taxon>
        <taxon>Candidatus Phytoplasma</taxon>
        <taxon>16SrI (Aster yellows group)</taxon>
    </lineage>
</organism>
<proteinExistence type="inferred from homology"/>
<keyword id="KW-0687">Ribonucleoprotein</keyword>
<keyword id="KW-0689">Ribosomal protein</keyword>
<keyword id="KW-0694">RNA-binding</keyword>
<keyword id="KW-0699">rRNA-binding</keyword>
<reference key="1">
    <citation type="journal article" date="2004" name="Nat. Genet.">
        <title>Reductive evolution suggested from the complete genome sequence of a plant-pathogenic phytoplasma.</title>
        <authorList>
            <person name="Oshima K."/>
            <person name="Kakizawa S."/>
            <person name="Nishigawa H."/>
            <person name="Jung H.-Y."/>
            <person name="Wei W."/>
            <person name="Suzuki S."/>
            <person name="Arashida R."/>
            <person name="Nakata D."/>
            <person name="Miyata S."/>
            <person name="Ugaki M."/>
            <person name="Namba S."/>
        </authorList>
    </citation>
    <scope>NUCLEOTIDE SEQUENCE [LARGE SCALE GENOMIC DNA]</scope>
    <source>
        <strain>OY-M</strain>
    </source>
</reference>
<feature type="chain" id="PRO_0000130689" description="Large ribosomal subunit protein uL24">
    <location>
        <begin position="1"/>
        <end position="79"/>
    </location>
</feature>
<feature type="region of interest" description="Disordered" evidence="2">
    <location>
        <begin position="1"/>
        <end position="29"/>
    </location>
</feature>
<feature type="compositionally biased region" description="Polar residues" evidence="2">
    <location>
        <begin position="11"/>
        <end position="23"/>
    </location>
</feature>
<dbReference type="EMBL" id="AP006628">
    <property type="protein sequence ID" value="BAD04296.1"/>
    <property type="molecule type" value="Genomic_DNA"/>
</dbReference>
<dbReference type="SMR" id="P60743"/>
<dbReference type="STRING" id="262768.PAM_211"/>
<dbReference type="KEGG" id="poy:PAM_211"/>
<dbReference type="eggNOG" id="COG0198">
    <property type="taxonomic scope" value="Bacteria"/>
</dbReference>
<dbReference type="HOGENOM" id="CLU_093315_4_0_14"/>
<dbReference type="Proteomes" id="UP000002523">
    <property type="component" value="Chromosome"/>
</dbReference>
<dbReference type="GO" id="GO:1990904">
    <property type="term" value="C:ribonucleoprotein complex"/>
    <property type="evidence" value="ECO:0007669"/>
    <property type="project" value="UniProtKB-KW"/>
</dbReference>
<dbReference type="GO" id="GO:0005840">
    <property type="term" value="C:ribosome"/>
    <property type="evidence" value="ECO:0007669"/>
    <property type="project" value="UniProtKB-KW"/>
</dbReference>
<dbReference type="GO" id="GO:0019843">
    <property type="term" value="F:rRNA binding"/>
    <property type="evidence" value="ECO:0007669"/>
    <property type="project" value="UniProtKB-KW"/>
</dbReference>
<dbReference type="GO" id="GO:0003735">
    <property type="term" value="F:structural constituent of ribosome"/>
    <property type="evidence" value="ECO:0007669"/>
    <property type="project" value="InterPro"/>
</dbReference>
<dbReference type="GO" id="GO:0006412">
    <property type="term" value="P:translation"/>
    <property type="evidence" value="ECO:0007669"/>
    <property type="project" value="InterPro"/>
</dbReference>
<dbReference type="CDD" id="cd06089">
    <property type="entry name" value="KOW_RPL26"/>
    <property type="match status" value="1"/>
</dbReference>
<dbReference type="Gene3D" id="2.30.30.30">
    <property type="match status" value="1"/>
</dbReference>
<dbReference type="InterPro" id="IPR014722">
    <property type="entry name" value="Rib_uL2_dom2"/>
</dbReference>
<dbReference type="InterPro" id="IPR003256">
    <property type="entry name" value="Ribosomal_uL24"/>
</dbReference>
<dbReference type="InterPro" id="IPR041988">
    <property type="entry name" value="Ribosomal_uL24_KOW"/>
</dbReference>
<dbReference type="InterPro" id="IPR008991">
    <property type="entry name" value="Translation_prot_SH3-like_sf"/>
</dbReference>
<dbReference type="NCBIfam" id="TIGR01079">
    <property type="entry name" value="rplX_bact"/>
    <property type="match status" value="1"/>
</dbReference>
<dbReference type="PANTHER" id="PTHR12903">
    <property type="entry name" value="MITOCHONDRIAL RIBOSOMAL PROTEIN L24"/>
    <property type="match status" value="1"/>
</dbReference>
<dbReference type="Pfam" id="PF17136">
    <property type="entry name" value="ribosomal_L24"/>
    <property type="match status" value="1"/>
</dbReference>
<dbReference type="SUPFAM" id="SSF50104">
    <property type="entry name" value="Translation proteins SH3-like domain"/>
    <property type="match status" value="1"/>
</dbReference>
<sequence length="79" mass="8736">MPKLKKLLLKVSTSKPNTNPPSQNEEKGTIVKQEAPIHVSNVALVCPQTQTPTKVGIRIQSGKKVRYAKKSNQTLDEKN</sequence>
<gene>
    <name type="primary">rplX</name>
    <name type="ordered locus">PAM_211</name>
</gene>
<protein>
    <recommendedName>
        <fullName evidence="3">Large ribosomal subunit protein uL24</fullName>
    </recommendedName>
    <alternativeName>
        <fullName>50S ribosomal protein L24</fullName>
    </alternativeName>
</protein>